<comment type="function">
    <text evidence="1">Global regulator with both positive and negative effects that controls the expression of several virulence factors and the biofilm formation process in a cell density-dependent manner.</text>
</comment>
<comment type="subunit">
    <text evidence="1">Homodimer.</text>
</comment>
<comment type="subcellular location">
    <subcellularLocation>
        <location evidence="1">Cytoplasm</location>
    </subcellularLocation>
</comment>
<comment type="similarity">
    <text evidence="2">Belongs to the SarA family.</text>
</comment>
<accession>Q6GJ52</accession>
<organism>
    <name type="scientific">Staphylococcus aureus (strain MRSA252)</name>
    <dbReference type="NCBI Taxonomy" id="282458"/>
    <lineage>
        <taxon>Bacteria</taxon>
        <taxon>Bacillati</taxon>
        <taxon>Bacillota</taxon>
        <taxon>Bacilli</taxon>
        <taxon>Bacillales</taxon>
        <taxon>Staphylococcaceae</taxon>
        <taxon>Staphylococcus</taxon>
    </lineage>
</organism>
<sequence>MAITKINDCFELLSMVTYADKLKSLIKKEFSISFEEFAVLTYISENKEKEYYLKDIINHLNYKQPQVVKAVKILSQEDYFDKKRNEHDERTVLILVNAQQRKKIESLLSRVNKRITEANNEIEL</sequence>
<protein>
    <recommendedName>
        <fullName>Transcriptional regulator SarA</fullName>
    </recommendedName>
    <alternativeName>
        <fullName>Staphylococcal accessory regulator A</fullName>
    </alternativeName>
</protein>
<name>SARA_STAAR</name>
<dbReference type="EMBL" id="BX571856">
    <property type="protein sequence ID" value="CAG39643.1"/>
    <property type="molecule type" value="Genomic_DNA"/>
</dbReference>
<dbReference type="RefSeq" id="WP_001018677.1">
    <property type="nucleotide sequence ID" value="NC_002952.2"/>
</dbReference>
<dbReference type="SMR" id="Q6GJ52"/>
<dbReference type="KEGG" id="sar:SAR0625"/>
<dbReference type="HOGENOM" id="CLU_164084_0_0_9"/>
<dbReference type="PRO" id="PR:Q6GJ52"/>
<dbReference type="Proteomes" id="UP000000596">
    <property type="component" value="Chromosome"/>
</dbReference>
<dbReference type="GO" id="GO:0005737">
    <property type="term" value="C:cytoplasm"/>
    <property type="evidence" value="ECO:0007669"/>
    <property type="project" value="UniProtKB-SubCell"/>
</dbReference>
<dbReference type="GO" id="GO:0003677">
    <property type="term" value="F:DNA binding"/>
    <property type="evidence" value="ECO:0007669"/>
    <property type="project" value="UniProtKB-KW"/>
</dbReference>
<dbReference type="GO" id="GO:0003700">
    <property type="term" value="F:DNA-binding transcription factor activity"/>
    <property type="evidence" value="ECO:0007669"/>
    <property type="project" value="InterPro"/>
</dbReference>
<dbReference type="GO" id="GO:0046872">
    <property type="term" value="F:metal ion binding"/>
    <property type="evidence" value="ECO:0007669"/>
    <property type="project" value="UniProtKB-KW"/>
</dbReference>
<dbReference type="GO" id="GO:0006950">
    <property type="term" value="P:response to stress"/>
    <property type="evidence" value="ECO:0007669"/>
    <property type="project" value="TreeGrafter"/>
</dbReference>
<dbReference type="FunFam" id="1.10.10.10:FF:000541">
    <property type="entry name" value="Transcriptional regulator SarA"/>
    <property type="match status" value="1"/>
</dbReference>
<dbReference type="Gene3D" id="1.10.10.10">
    <property type="entry name" value="Winged helix-like DNA-binding domain superfamily/Winged helix DNA-binding domain"/>
    <property type="match status" value="1"/>
</dbReference>
<dbReference type="InterPro" id="IPR039422">
    <property type="entry name" value="MarR/SlyA-like"/>
</dbReference>
<dbReference type="InterPro" id="IPR010166">
    <property type="entry name" value="SarA/Rot_dom"/>
</dbReference>
<dbReference type="InterPro" id="IPR055166">
    <property type="entry name" value="Transc_reg_Sar_Rot_HTH"/>
</dbReference>
<dbReference type="InterPro" id="IPR036388">
    <property type="entry name" value="WH-like_DNA-bd_sf"/>
</dbReference>
<dbReference type="InterPro" id="IPR036390">
    <property type="entry name" value="WH_DNA-bd_sf"/>
</dbReference>
<dbReference type="NCBIfam" id="TIGR01889">
    <property type="entry name" value="Staph_reg_Sar"/>
    <property type="match status" value="1"/>
</dbReference>
<dbReference type="NCBIfam" id="NF038268">
    <property type="entry name" value="TF_SarA"/>
    <property type="match status" value="1"/>
</dbReference>
<dbReference type="PANTHER" id="PTHR33164:SF5">
    <property type="entry name" value="ORGANIC HYDROPEROXIDE RESISTANCE TRANSCRIPTIONAL REGULATOR"/>
    <property type="match status" value="1"/>
</dbReference>
<dbReference type="PANTHER" id="PTHR33164">
    <property type="entry name" value="TRANSCRIPTIONAL REGULATOR, MARR FAMILY"/>
    <property type="match status" value="1"/>
</dbReference>
<dbReference type="Pfam" id="PF22381">
    <property type="entry name" value="Staph_reg_Sar_Rot"/>
    <property type="match status" value="1"/>
</dbReference>
<dbReference type="SUPFAM" id="SSF46785">
    <property type="entry name" value="Winged helix' DNA-binding domain"/>
    <property type="match status" value="1"/>
</dbReference>
<keyword id="KW-0010">Activator</keyword>
<keyword id="KW-0963">Cytoplasm</keyword>
<keyword id="KW-0238">DNA-binding</keyword>
<keyword id="KW-0479">Metal-binding</keyword>
<keyword id="KW-0678">Repressor</keyword>
<keyword id="KW-0804">Transcription</keyword>
<keyword id="KW-0805">Transcription regulation</keyword>
<keyword id="KW-0843">Virulence</keyword>
<evidence type="ECO:0000250" key="1"/>
<evidence type="ECO:0000305" key="2"/>
<gene>
    <name type="primary">sarA</name>
    <name type="ordered locus">SAR0625</name>
</gene>
<reference key="1">
    <citation type="journal article" date="2004" name="Proc. Natl. Acad. Sci. U.S.A.">
        <title>Complete genomes of two clinical Staphylococcus aureus strains: evidence for the rapid evolution of virulence and drug resistance.</title>
        <authorList>
            <person name="Holden M.T.G."/>
            <person name="Feil E.J."/>
            <person name="Lindsay J.A."/>
            <person name="Peacock S.J."/>
            <person name="Day N.P.J."/>
            <person name="Enright M.C."/>
            <person name="Foster T.J."/>
            <person name="Moore C.E."/>
            <person name="Hurst L."/>
            <person name="Atkin R."/>
            <person name="Barron A."/>
            <person name="Bason N."/>
            <person name="Bentley S.D."/>
            <person name="Chillingworth C."/>
            <person name="Chillingworth T."/>
            <person name="Churcher C."/>
            <person name="Clark L."/>
            <person name="Corton C."/>
            <person name="Cronin A."/>
            <person name="Doggett J."/>
            <person name="Dowd L."/>
            <person name="Feltwell T."/>
            <person name="Hance Z."/>
            <person name="Harris B."/>
            <person name="Hauser H."/>
            <person name="Holroyd S."/>
            <person name="Jagels K."/>
            <person name="James K.D."/>
            <person name="Lennard N."/>
            <person name="Line A."/>
            <person name="Mayes R."/>
            <person name="Moule S."/>
            <person name="Mungall K."/>
            <person name="Ormond D."/>
            <person name="Quail M.A."/>
            <person name="Rabbinowitsch E."/>
            <person name="Rutherford K.M."/>
            <person name="Sanders M."/>
            <person name="Sharp S."/>
            <person name="Simmonds M."/>
            <person name="Stevens K."/>
            <person name="Whitehead S."/>
            <person name="Barrell B.G."/>
            <person name="Spratt B.G."/>
            <person name="Parkhill J."/>
        </authorList>
    </citation>
    <scope>NUCLEOTIDE SEQUENCE [LARGE SCALE GENOMIC DNA]</scope>
    <source>
        <strain>MRSA252</strain>
    </source>
</reference>
<proteinExistence type="inferred from homology"/>
<feature type="initiator methionine" description="Removed" evidence="1">
    <location>
        <position position="1"/>
    </location>
</feature>
<feature type="chain" id="PRO_0000219580" description="Transcriptional regulator SarA">
    <location>
        <begin position="2"/>
        <end position="124"/>
    </location>
</feature>
<feature type="binding site" evidence="1">
    <location>
        <position position="7"/>
    </location>
    <ligand>
        <name>a divalent metal cation</name>
        <dbReference type="ChEBI" id="CHEBI:60240"/>
    </ligand>
</feature>
<feature type="binding site" evidence="1">
    <location>
        <position position="8"/>
    </location>
    <ligand>
        <name>a divalent metal cation</name>
        <dbReference type="ChEBI" id="CHEBI:60240"/>
    </ligand>
</feature>
<feature type="binding site" evidence="1">
    <location>
        <position position="11"/>
    </location>
    <ligand>
        <name>a divalent metal cation</name>
        <dbReference type="ChEBI" id="CHEBI:60240"/>
    </ligand>
</feature>